<evidence type="ECO:0000255" key="1">
    <source>
        <dbReference type="HAMAP-Rule" id="MF_00541"/>
    </source>
</evidence>
<evidence type="ECO:0000305" key="2"/>
<reference key="1">
    <citation type="journal article" date="2001" name="Nature">
        <title>Complete genome sequence of Salmonella enterica serovar Typhimurium LT2.</title>
        <authorList>
            <person name="McClelland M."/>
            <person name="Sanderson K.E."/>
            <person name="Spieth J."/>
            <person name="Clifton S.W."/>
            <person name="Latreille P."/>
            <person name="Courtney L."/>
            <person name="Porwollik S."/>
            <person name="Ali J."/>
            <person name="Dante M."/>
            <person name="Du F."/>
            <person name="Hou S."/>
            <person name="Layman D."/>
            <person name="Leonard S."/>
            <person name="Nguyen C."/>
            <person name="Scott K."/>
            <person name="Holmes A."/>
            <person name="Grewal N."/>
            <person name="Mulvaney E."/>
            <person name="Ryan E."/>
            <person name="Sun H."/>
            <person name="Florea L."/>
            <person name="Miller W."/>
            <person name="Stoneking T."/>
            <person name="Nhan M."/>
            <person name="Waterston R."/>
            <person name="Wilson R.K."/>
        </authorList>
    </citation>
    <scope>NUCLEOTIDE SEQUENCE [LARGE SCALE GENOMIC DNA]</scope>
    <source>
        <strain>LT2 / SGSC1412 / ATCC 700720</strain>
    </source>
</reference>
<reference key="2">
    <citation type="journal article" date="1991" name="Gene">
        <title>Cloning and characterization of the L-rhamnose regulon in Salmonella typhimurium LT2.</title>
        <authorList>
            <person name="Nishitani J."/>
            <person name="Wilcox G."/>
        </authorList>
    </citation>
    <scope>NUCLEOTIDE SEQUENCE [GENOMIC DNA] OF 1-70</scope>
    <source>
        <strain>LT2</strain>
    </source>
</reference>
<feature type="chain" id="PRO_0000090566" description="L-rhamnose isomerase">
    <location>
        <begin position="1"/>
        <end position="419"/>
    </location>
</feature>
<feature type="binding site" evidence="1">
    <location>
        <position position="262"/>
    </location>
    <ligand>
        <name>Mn(2+)</name>
        <dbReference type="ChEBI" id="CHEBI:29035"/>
    </ligand>
</feature>
<feature type="binding site" evidence="1">
    <location>
        <position position="294"/>
    </location>
    <ligand>
        <name>Mn(2+)</name>
        <dbReference type="ChEBI" id="CHEBI:29035"/>
    </ligand>
</feature>
<feature type="binding site" evidence="1">
    <location>
        <position position="296"/>
    </location>
    <ligand>
        <name>Mn(2+)</name>
        <dbReference type="ChEBI" id="CHEBI:29035"/>
    </ligand>
</feature>
<feature type="sequence conflict" description="In Ref. 2." evidence="2" ref="2">
    <original>QSTGNYPGKAR</original>
    <variation>RNHGHSCFLCE</variation>
    <location>
        <begin position="60"/>
        <end position="70"/>
    </location>
</feature>
<accession>P27031</accession>
<sequence>MTTQLEQAWELAKQRFAAVGIDVEEALRQLDRLPVSMHCWQGDDVAGFENPEGSLTGGIQSTGNYPGKARNATELRADLEQALRLIPGPKRLNLHAIYLESDTPVARDQIKPEHFKNWVEWAKANRLGLDFNPTCFSHPLSADGFTLSHPDAKIRQFWIDHCKASRRVSAYFGEQLGTPSVMNIWIPDGMKDITVDRLAPRQRLLEALDEVISEKFDPAHHIDAVESKLFGIGAESYTVGSNEFYMGYATSRQTALCLDAGHFHPTEVISDKISAAMLYVPRLLLHVSRPVRWDSDHVVLLDDETQAIASEIVRHNLFDRVHIGLDFFDASINRVAAWVIGTRNMKKALLRALLEPTDQLRQLEASGDYTARLALLEEQKSLPWQAVWEMYCQRHDTPAGSQWLDSVRVYEKEILSKRS</sequence>
<gene>
    <name evidence="1" type="primary">rhaA</name>
    <name type="ordered locus">STM4046</name>
</gene>
<organism>
    <name type="scientific">Salmonella typhimurium (strain LT2 / SGSC1412 / ATCC 700720)</name>
    <dbReference type="NCBI Taxonomy" id="99287"/>
    <lineage>
        <taxon>Bacteria</taxon>
        <taxon>Pseudomonadati</taxon>
        <taxon>Pseudomonadota</taxon>
        <taxon>Gammaproteobacteria</taxon>
        <taxon>Enterobacterales</taxon>
        <taxon>Enterobacteriaceae</taxon>
        <taxon>Salmonella</taxon>
    </lineage>
</organism>
<name>RHAA_SALTY</name>
<keyword id="KW-0963">Cytoplasm</keyword>
<keyword id="KW-0413">Isomerase</keyword>
<keyword id="KW-0464">Manganese</keyword>
<keyword id="KW-0479">Metal-binding</keyword>
<keyword id="KW-1185">Reference proteome</keyword>
<keyword id="KW-0684">Rhamnose metabolism</keyword>
<comment type="function">
    <text evidence="1">Catalyzes the interconversion of L-rhamnose and L-rhamnulose.</text>
</comment>
<comment type="catalytic activity">
    <reaction evidence="1">
        <text>L-rhamnopyranose = L-rhamnulose</text>
        <dbReference type="Rhea" id="RHEA:23160"/>
        <dbReference type="ChEBI" id="CHEBI:17897"/>
        <dbReference type="ChEBI" id="CHEBI:62346"/>
        <dbReference type="EC" id="5.3.1.14"/>
    </reaction>
</comment>
<comment type="cofactor">
    <cofactor evidence="1">
        <name>Mn(2+)</name>
        <dbReference type="ChEBI" id="CHEBI:29035"/>
    </cofactor>
    <text evidence="1">Binds 1 Mn(2+) ion per subunit.</text>
</comment>
<comment type="pathway">
    <text evidence="1">Carbohydrate degradation; L-rhamnose degradation; glycerone phosphate from L-rhamnose: step 1/3.</text>
</comment>
<comment type="subunit">
    <text evidence="1">Homotetramer.</text>
</comment>
<comment type="subcellular location">
    <subcellularLocation>
        <location evidence="1">Cytoplasm</location>
    </subcellularLocation>
</comment>
<comment type="similarity">
    <text evidence="1">Belongs to the rhamnose isomerase family.</text>
</comment>
<proteinExistence type="inferred from homology"/>
<protein>
    <recommendedName>
        <fullName evidence="1">L-rhamnose isomerase</fullName>
        <ecNumber evidence="1">5.3.1.14</ecNumber>
    </recommendedName>
</protein>
<dbReference type="EC" id="5.3.1.14" evidence="1"/>
<dbReference type="EMBL" id="AE006468">
    <property type="protein sequence ID" value="AAL22886.1"/>
    <property type="molecule type" value="Genomic_DNA"/>
</dbReference>
<dbReference type="EMBL" id="X57299">
    <property type="protein sequence ID" value="CAA40558.1"/>
    <property type="molecule type" value="Genomic_DNA"/>
</dbReference>
<dbReference type="PIR" id="S21854">
    <property type="entry name" value="S21854"/>
</dbReference>
<dbReference type="RefSeq" id="NP_462927.1">
    <property type="nucleotide sequence ID" value="NC_003197.2"/>
</dbReference>
<dbReference type="RefSeq" id="WP_000211470.1">
    <property type="nucleotide sequence ID" value="NC_003197.2"/>
</dbReference>
<dbReference type="SMR" id="P27031"/>
<dbReference type="STRING" id="99287.STM4046"/>
<dbReference type="PaxDb" id="99287-STM4046"/>
<dbReference type="GeneID" id="1255573"/>
<dbReference type="KEGG" id="stm:STM4046"/>
<dbReference type="PATRIC" id="fig|99287.12.peg.4263"/>
<dbReference type="HOGENOM" id="CLU_052790_0_0_6"/>
<dbReference type="PhylomeDB" id="P27031"/>
<dbReference type="BioCyc" id="SENT99287:STM4046-MONOMER"/>
<dbReference type="UniPathway" id="UPA00541">
    <property type="reaction ID" value="UER00601"/>
</dbReference>
<dbReference type="Proteomes" id="UP000001014">
    <property type="component" value="Chromosome"/>
</dbReference>
<dbReference type="GO" id="GO:0005737">
    <property type="term" value="C:cytoplasm"/>
    <property type="evidence" value="ECO:0007669"/>
    <property type="project" value="UniProtKB-SubCell"/>
</dbReference>
<dbReference type="GO" id="GO:0008740">
    <property type="term" value="F:L-rhamnose isomerase activity"/>
    <property type="evidence" value="ECO:0000318"/>
    <property type="project" value="GO_Central"/>
</dbReference>
<dbReference type="GO" id="GO:0030145">
    <property type="term" value="F:manganese ion binding"/>
    <property type="evidence" value="ECO:0007669"/>
    <property type="project" value="UniProtKB-UniRule"/>
</dbReference>
<dbReference type="GO" id="GO:0019324">
    <property type="term" value="P:L-lyxose metabolic process"/>
    <property type="evidence" value="ECO:0000318"/>
    <property type="project" value="GO_Central"/>
</dbReference>
<dbReference type="GO" id="GO:0019301">
    <property type="term" value="P:rhamnose catabolic process"/>
    <property type="evidence" value="ECO:0000318"/>
    <property type="project" value="GO_Central"/>
</dbReference>
<dbReference type="FunFam" id="3.20.20.150:FF:000006">
    <property type="entry name" value="L-rhamnose isomerase"/>
    <property type="match status" value="1"/>
</dbReference>
<dbReference type="Gene3D" id="3.20.20.150">
    <property type="entry name" value="Divalent-metal-dependent TIM barrel enzymes"/>
    <property type="match status" value="1"/>
</dbReference>
<dbReference type="HAMAP" id="MF_00541">
    <property type="entry name" value="RhaA"/>
    <property type="match status" value="1"/>
</dbReference>
<dbReference type="InterPro" id="IPR050337">
    <property type="entry name" value="L-rhamnose_isomerase"/>
</dbReference>
<dbReference type="InterPro" id="IPR009308">
    <property type="entry name" value="Rhamnose_isomerase"/>
</dbReference>
<dbReference type="InterPro" id="IPR036237">
    <property type="entry name" value="Xyl_isomerase-like_sf"/>
</dbReference>
<dbReference type="NCBIfam" id="NF002203">
    <property type="entry name" value="PRK01076.1"/>
    <property type="match status" value="1"/>
</dbReference>
<dbReference type="NCBIfam" id="TIGR01748">
    <property type="entry name" value="rhaA"/>
    <property type="match status" value="1"/>
</dbReference>
<dbReference type="PANTHER" id="PTHR30268">
    <property type="entry name" value="L-RHAMNOSE ISOMERASE"/>
    <property type="match status" value="1"/>
</dbReference>
<dbReference type="PANTHER" id="PTHR30268:SF0">
    <property type="entry name" value="L-RHAMNOSE ISOMERASE"/>
    <property type="match status" value="1"/>
</dbReference>
<dbReference type="Pfam" id="PF06134">
    <property type="entry name" value="RhaA"/>
    <property type="match status" value="1"/>
</dbReference>
<dbReference type="SUPFAM" id="SSF51658">
    <property type="entry name" value="Xylose isomerase-like"/>
    <property type="match status" value="1"/>
</dbReference>